<protein>
    <recommendedName>
        <fullName evidence="1">Cytochrome b6-f complex subunit 5</fullName>
    </recommendedName>
    <alternativeName>
        <fullName evidence="1">Cytochrome b6-f complex subunit PetG</fullName>
    </alternativeName>
    <alternativeName>
        <fullName evidence="1">Cytochrome b6-f complex subunit V</fullName>
    </alternativeName>
</protein>
<comment type="function">
    <text evidence="1">Component of the cytochrome b6-f complex, which mediates electron transfer between photosystem II (PSII) and photosystem I (PSI), cyclic electron flow around PSI, and state transitions. PetG is required for either the stability or assembly of the cytochrome b6-f complex.</text>
</comment>
<comment type="subunit">
    <text evidence="1">The 4 large subunits of the cytochrome b6-f complex are cytochrome b6, subunit IV (17 kDa polypeptide, PetD), cytochrome f and the Rieske protein, while the 4 small subunits are PetG, PetL, PetM and PetN. The complex functions as a dimer.</text>
</comment>
<comment type="subcellular location">
    <subcellularLocation>
        <location evidence="1">Plastid</location>
        <location evidence="1">Chloroplast thylakoid membrane</location>
        <topology evidence="1">Single-pass membrane protein</topology>
    </subcellularLocation>
</comment>
<comment type="similarity">
    <text evidence="1">Belongs to the PetG family.</text>
</comment>
<proteinExistence type="inferred from homology"/>
<keyword id="KW-0150">Chloroplast</keyword>
<keyword id="KW-0249">Electron transport</keyword>
<keyword id="KW-0472">Membrane</keyword>
<keyword id="KW-0602">Photosynthesis</keyword>
<keyword id="KW-0934">Plastid</keyword>
<keyword id="KW-1185">Reference proteome</keyword>
<keyword id="KW-0793">Thylakoid</keyword>
<keyword id="KW-0812">Transmembrane</keyword>
<keyword id="KW-1133">Transmembrane helix</keyword>
<keyword id="KW-0813">Transport</keyword>
<organism>
    <name type="scientific">Cyanidioschyzon merolae (strain NIES-3377 / 10D)</name>
    <name type="common">Unicellular red alga</name>
    <dbReference type="NCBI Taxonomy" id="280699"/>
    <lineage>
        <taxon>Eukaryota</taxon>
        <taxon>Rhodophyta</taxon>
        <taxon>Bangiophyceae</taxon>
        <taxon>Cyanidiales</taxon>
        <taxon>Cyanidiaceae</taxon>
        <taxon>Cyanidioschyzon</taxon>
    </lineage>
</organism>
<dbReference type="EMBL" id="AB002583">
    <property type="protein sequence ID" value="BAC76210.1"/>
    <property type="molecule type" value="Genomic_DNA"/>
</dbReference>
<dbReference type="RefSeq" id="NP_849048.1">
    <property type="nucleotide sequence ID" value="NC_004799.1"/>
</dbReference>
<dbReference type="SMR" id="Q85FY3"/>
<dbReference type="STRING" id="280699.Q85FY3"/>
<dbReference type="EnsemblPlants" id="CMV139CT">
    <property type="protein sequence ID" value="CMV139CT"/>
    <property type="gene ID" value="CMV139C"/>
</dbReference>
<dbReference type="GeneID" id="844929"/>
<dbReference type="Gramene" id="CMV139CT">
    <property type="protein sequence ID" value="CMV139CT"/>
    <property type="gene ID" value="CMV139C"/>
</dbReference>
<dbReference type="KEGG" id="cme:CymeCp116"/>
<dbReference type="HOGENOM" id="CLU_216962_0_0_1"/>
<dbReference type="Proteomes" id="UP000007014">
    <property type="component" value="Chloroplast"/>
</dbReference>
<dbReference type="GO" id="GO:0009535">
    <property type="term" value="C:chloroplast thylakoid membrane"/>
    <property type="evidence" value="ECO:0007669"/>
    <property type="project" value="UniProtKB-SubCell"/>
</dbReference>
<dbReference type="GO" id="GO:0009512">
    <property type="term" value="C:cytochrome b6f complex"/>
    <property type="evidence" value="ECO:0007669"/>
    <property type="project" value="InterPro"/>
</dbReference>
<dbReference type="GO" id="GO:0045158">
    <property type="term" value="F:electron transporter, transferring electrons within cytochrome b6/f complex of photosystem II activity"/>
    <property type="evidence" value="ECO:0007669"/>
    <property type="project" value="UniProtKB-UniRule"/>
</dbReference>
<dbReference type="GO" id="GO:0017004">
    <property type="term" value="P:cytochrome complex assembly"/>
    <property type="evidence" value="ECO:0007669"/>
    <property type="project" value="UniProtKB-UniRule"/>
</dbReference>
<dbReference type="GO" id="GO:0015979">
    <property type="term" value="P:photosynthesis"/>
    <property type="evidence" value="ECO:0007669"/>
    <property type="project" value="UniProtKB-KW"/>
</dbReference>
<dbReference type="HAMAP" id="MF_00432">
    <property type="entry name" value="Cytb6_f_PetG"/>
    <property type="match status" value="1"/>
</dbReference>
<dbReference type="InterPro" id="IPR003683">
    <property type="entry name" value="Cyt_6/f_cplx_su5"/>
</dbReference>
<dbReference type="InterPro" id="IPR036099">
    <property type="entry name" value="Cyt_6/f_cplx_su5_sf"/>
</dbReference>
<dbReference type="Pfam" id="PF02529">
    <property type="entry name" value="PetG"/>
    <property type="match status" value="1"/>
</dbReference>
<dbReference type="PIRSF" id="PIRSF000034">
    <property type="entry name" value="Cyt_b6-f_V"/>
    <property type="match status" value="1"/>
</dbReference>
<dbReference type="SUPFAM" id="SSF103446">
    <property type="entry name" value="PetG subunit of the cytochrome b6f complex"/>
    <property type="match status" value="1"/>
</dbReference>
<gene>
    <name evidence="1" type="primary">petG</name>
</gene>
<name>PETG_CYAM1</name>
<feature type="chain" id="PRO_0000216380" description="Cytochrome b6-f complex subunit 5">
    <location>
        <begin position="1"/>
        <end position="36"/>
    </location>
</feature>
<feature type="transmembrane region" description="Helical" evidence="1">
    <location>
        <begin position="5"/>
        <end position="25"/>
    </location>
</feature>
<accession>Q85FY3</accession>
<evidence type="ECO:0000255" key="1">
    <source>
        <dbReference type="HAMAP-Rule" id="MF_00432"/>
    </source>
</evidence>
<reference key="1">
    <citation type="journal article" date="2003" name="DNA Res.">
        <title>Complete sequence and analysis of the plastid genome of the unicellular red alga Cyanidioschyzon merolae.</title>
        <authorList>
            <person name="Ohta N."/>
            <person name="Matsuzaki M."/>
            <person name="Misumi O."/>
            <person name="Miyagishima S.-Y."/>
            <person name="Nozaki H."/>
            <person name="Tanaka K."/>
            <person name="Shin-i T."/>
            <person name="Kohara Y."/>
            <person name="Kuroiwa T."/>
        </authorList>
    </citation>
    <scope>NUCLEOTIDE SEQUENCE [LARGE SCALE GENOMIC DNA]</scope>
    <source>
        <strain>NIES-3377 / 10D</strain>
    </source>
</reference>
<sequence>MVEILLSGIVLGLIPITILGLLMAAYFQYQRSKAAS</sequence>
<geneLocation type="chloroplast"/>